<proteinExistence type="inferred from homology"/>
<name>SYH_UREP2</name>
<sequence>MINYSKPRGTIDLYNKEMNDFKLLENFLLSTTKRYGFQQIKTPVFEFAELFMKSAGESSDLVSKEMYLFKDKSDRWLALRPEGTAGVIRAVVENKLLLNHPLPLKLMYFEPCFRYERPQAGRQRQFHQFGVEVLGTKNIYYDFELIALADTILKKLMISNYILEINYISSPHNRSLWVKSLQEYFHLHRTELTPLSQERITTNPLRILDDKLESQKLVVKQAPKISHFLSNEEKEEFNLIKKMLDDYNIKYYVNEGLVRGLDYYSGLVFEFISTSPKLLGQSTIIGGGRYGELIKQTGGPNYEGIGFGIGIERLLIALSETNKNILNTDDDKYLIAFFDKELENEAIKLTQILRINNQLNVDIILSSTKADKIFKLAQRLNVKKLIILAKKEWSDKKIILKDLLNFKQDLLSLDEIKGIR</sequence>
<evidence type="ECO:0000255" key="1">
    <source>
        <dbReference type="HAMAP-Rule" id="MF_00127"/>
    </source>
</evidence>
<dbReference type="EC" id="6.1.1.21" evidence="1"/>
<dbReference type="EMBL" id="CP000942">
    <property type="protein sequence ID" value="ACA32847.1"/>
    <property type="molecule type" value="Genomic_DNA"/>
</dbReference>
<dbReference type="RefSeq" id="WP_006688869.1">
    <property type="nucleotide sequence ID" value="NC_010503.1"/>
</dbReference>
<dbReference type="SMR" id="B1AIS5"/>
<dbReference type="GeneID" id="29672568"/>
<dbReference type="KEGG" id="upa:UPA3_0295"/>
<dbReference type="HOGENOM" id="CLU_025113_1_1_14"/>
<dbReference type="Proteomes" id="UP000002162">
    <property type="component" value="Chromosome"/>
</dbReference>
<dbReference type="GO" id="GO:0005737">
    <property type="term" value="C:cytoplasm"/>
    <property type="evidence" value="ECO:0007669"/>
    <property type="project" value="UniProtKB-SubCell"/>
</dbReference>
<dbReference type="GO" id="GO:0005524">
    <property type="term" value="F:ATP binding"/>
    <property type="evidence" value="ECO:0007669"/>
    <property type="project" value="UniProtKB-UniRule"/>
</dbReference>
<dbReference type="GO" id="GO:0004821">
    <property type="term" value="F:histidine-tRNA ligase activity"/>
    <property type="evidence" value="ECO:0007669"/>
    <property type="project" value="UniProtKB-UniRule"/>
</dbReference>
<dbReference type="GO" id="GO:0006427">
    <property type="term" value="P:histidyl-tRNA aminoacylation"/>
    <property type="evidence" value="ECO:0007669"/>
    <property type="project" value="UniProtKB-UniRule"/>
</dbReference>
<dbReference type="CDD" id="cd00773">
    <property type="entry name" value="HisRS-like_core"/>
    <property type="match status" value="1"/>
</dbReference>
<dbReference type="Gene3D" id="3.40.50.800">
    <property type="entry name" value="Anticodon-binding domain"/>
    <property type="match status" value="1"/>
</dbReference>
<dbReference type="Gene3D" id="3.30.930.10">
    <property type="entry name" value="Bira Bifunctional Protein, Domain 2"/>
    <property type="match status" value="1"/>
</dbReference>
<dbReference type="HAMAP" id="MF_00127">
    <property type="entry name" value="His_tRNA_synth"/>
    <property type="match status" value="1"/>
</dbReference>
<dbReference type="InterPro" id="IPR006195">
    <property type="entry name" value="aa-tRNA-synth_II"/>
</dbReference>
<dbReference type="InterPro" id="IPR045864">
    <property type="entry name" value="aa-tRNA-synth_II/BPL/LPL"/>
</dbReference>
<dbReference type="InterPro" id="IPR036621">
    <property type="entry name" value="Anticodon-bd_dom_sf"/>
</dbReference>
<dbReference type="InterPro" id="IPR015807">
    <property type="entry name" value="His-tRNA-ligase"/>
</dbReference>
<dbReference type="InterPro" id="IPR041715">
    <property type="entry name" value="HisRS-like_core"/>
</dbReference>
<dbReference type="InterPro" id="IPR004516">
    <property type="entry name" value="HisRS/HisZ"/>
</dbReference>
<dbReference type="NCBIfam" id="TIGR00442">
    <property type="entry name" value="hisS"/>
    <property type="match status" value="1"/>
</dbReference>
<dbReference type="PANTHER" id="PTHR43707:SF1">
    <property type="entry name" value="HISTIDINE--TRNA LIGASE, MITOCHONDRIAL-RELATED"/>
    <property type="match status" value="1"/>
</dbReference>
<dbReference type="PANTHER" id="PTHR43707">
    <property type="entry name" value="HISTIDYL-TRNA SYNTHETASE"/>
    <property type="match status" value="1"/>
</dbReference>
<dbReference type="Pfam" id="PF13393">
    <property type="entry name" value="tRNA-synt_His"/>
    <property type="match status" value="1"/>
</dbReference>
<dbReference type="PIRSF" id="PIRSF001549">
    <property type="entry name" value="His-tRNA_synth"/>
    <property type="match status" value="1"/>
</dbReference>
<dbReference type="SUPFAM" id="SSF52954">
    <property type="entry name" value="Class II aaRS ABD-related"/>
    <property type="match status" value="1"/>
</dbReference>
<dbReference type="SUPFAM" id="SSF55681">
    <property type="entry name" value="Class II aaRS and biotin synthetases"/>
    <property type="match status" value="1"/>
</dbReference>
<dbReference type="PROSITE" id="PS50862">
    <property type="entry name" value="AA_TRNA_LIGASE_II"/>
    <property type="match status" value="1"/>
</dbReference>
<keyword id="KW-0030">Aminoacyl-tRNA synthetase</keyword>
<keyword id="KW-0067">ATP-binding</keyword>
<keyword id="KW-0963">Cytoplasm</keyword>
<keyword id="KW-0436">Ligase</keyword>
<keyword id="KW-0547">Nucleotide-binding</keyword>
<keyword id="KW-0648">Protein biosynthesis</keyword>
<feature type="chain" id="PRO_1000076294" description="Histidine--tRNA ligase">
    <location>
        <begin position="1"/>
        <end position="420"/>
    </location>
</feature>
<protein>
    <recommendedName>
        <fullName evidence="1">Histidine--tRNA ligase</fullName>
        <ecNumber evidence="1">6.1.1.21</ecNumber>
    </recommendedName>
    <alternativeName>
        <fullName evidence="1">Histidyl-tRNA synthetase</fullName>
        <shortName evidence="1">HisRS</shortName>
    </alternativeName>
</protein>
<comment type="catalytic activity">
    <reaction evidence="1">
        <text>tRNA(His) + L-histidine + ATP = L-histidyl-tRNA(His) + AMP + diphosphate + H(+)</text>
        <dbReference type="Rhea" id="RHEA:17313"/>
        <dbReference type="Rhea" id="RHEA-COMP:9665"/>
        <dbReference type="Rhea" id="RHEA-COMP:9689"/>
        <dbReference type="ChEBI" id="CHEBI:15378"/>
        <dbReference type="ChEBI" id="CHEBI:30616"/>
        <dbReference type="ChEBI" id="CHEBI:33019"/>
        <dbReference type="ChEBI" id="CHEBI:57595"/>
        <dbReference type="ChEBI" id="CHEBI:78442"/>
        <dbReference type="ChEBI" id="CHEBI:78527"/>
        <dbReference type="ChEBI" id="CHEBI:456215"/>
        <dbReference type="EC" id="6.1.1.21"/>
    </reaction>
</comment>
<comment type="subunit">
    <text evidence="1">Homodimer.</text>
</comment>
<comment type="subcellular location">
    <subcellularLocation>
        <location evidence="1">Cytoplasm</location>
    </subcellularLocation>
</comment>
<comment type="similarity">
    <text evidence="1">Belongs to the class-II aminoacyl-tRNA synthetase family.</text>
</comment>
<reference key="1">
    <citation type="submission" date="2008-02" db="EMBL/GenBank/DDBJ databases">
        <title>Genome sequence of Ureaplasma parvum serovar 3.</title>
        <authorList>
            <person name="Methe B.A."/>
            <person name="Glass J."/>
            <person name="Waites K."/>
            <person name="Shrivastava S."/>
        </authorList>
    </citation>
    <scope>NUCLEOTIDE SEQUENCE [LARGE SCALE GENOMIC DNA]</scope>
    <source>
        <strain>ATCC 27815 / 27 / NCTC 11736</strain>
    </source>
</reference>
<gene>
    <name evidence="1" type="primary">hisS</name>
    <name type="ordered locus">UPA3_0295</name>
</gene>
<accession>B1AIS5</accession>
<organism>
    <name type="scientific">Ureaplasma parvum serovar 3 (strain ATCC 27815 / 27 / NCTC 11736)</name>
    <dbReference type="NCBI Taxonomy" id="505682"/>
    <lineage>
        <taxon>Bacteria</taxon>
        <taxon>Bacillati</taxon>
        <taxon>Mycoplasmatota</taxon>
        <taxon>Mycoplasmoidales</taxon>
        <taxon>Mycoplasmoidaceae</taxon>
        <taxon>Ureaplasma</taxon>
    </lineage>
</organism>